<accession>P01381</accession>
<name>3L22_HYDST</name>
<dbReference type="PIR" id="A01652">
    <property type="entry name" value="N2AT2"/>
</dbReference>
<dbReference type="SMR" id="P01381"/>
<dbReference type="GO" id="GO:0005576">
    <property type="term" value="C:extracellular region"/>
    <property type="evidence" value="ECO:0007669"/>
    <property type="project" value="UniProtKB-SubCell"/>
</dbReference>
<dbReference type="GO" id="GO:0030550">
    <property type="term" value="F:acetylcholine receptor inhibitor activity"/>
    <property type="evidence" value="ECO:0007669"/>
    <property type="project" value="UniProtKB-KW"/>
</dbReference>
<dbReference type="GO" id="GO:0099106">
    <property type="term" value="F:ion channel regulator activity"/>
    <property type="evidence" value="ECO:0007669"/>
    <property type="project" value="UniProtKB-KW"/>
</dbReference>
<dbReference type="GO" id="GO:0090729">
    <property type="term" value="F:toxin activity"/>
    <property type="evidence" value="ECO:0007669"/>
    <property type="project" value="UniProtKB-KW"/>
</dbReference>
<dbReference type="CDD" id="cd00206">
    <property type="entry name" value="TFP_snake_toxin"/>
    <property type="match status" value="1"/>
</dbReference>
<dbReference type="Gene3D" id="2.10.60.10">
    <property type="entry name" value="CD59"/>
    <property type="match status" value="1"/>
</dbReference>
<dbReference type="InterPro" id="IPR003571">
    <property type="entry name" value="Snake_3FTx"/>
</dbReference>
<dbReference type="InterPro" id="IPR045860">
    <property type="entry name" value="Snake_toxin-like_sf"/>
</dbReference>
<dbReference type="InterPro" id="IPR018354">
    <property type="entry name" value="Snake_toxin_con_site"/>
</dbReference>
<dbReference type="InterPro" id="IPR054131">
    <property type="entry name" value="Toxin_cobra-type"/>
</dbReference>
<dbReference type="Pfam" id="PF21947">
    <property type="entry name" value="Toxin_cobra-type"/>
    <property type="match status" value="1"/>
</dbReference>
<dbReference type="SUPFAM" id="SSF57302">
    <property type="entry name" value="Snake toxin-like"/>
    <property type="match status" value="1"/>
</dbReference>
<dbReference type="PROSITE" id="PS00272">
    <property type="entry name" value="SNAKE_TOXIN"/>
    <property type="match status" value="1"/>
</dbReference>
<protein>
    <recommendedName>
        <fullName>Alpha-elapitoxin-Ast2b</fullName>
        <shortName>Alpha-EPTX-Ast2b</shortName>
    </recommendedName>
    <alternativeName>
        <fullName>Long neurotoxin 2</fullName>
    </alternativeName>
    <alternativeName>
        <fullName>Toxin C</fullName>
    </alternativeName>
</protein>
<feature type="chain" id="PRO_0000093531" description="Alpha-elapitoxin-Ast2b">
    <location>
        <begin position="1"/>
        <end position="72"/>
    </location>
</feature>
<feature type="modified residue" description="Arginine amide" evidence="3">
    <location>
        <position position="72"/>
    </location>
</feature>
<feature type="disulfide bond" evidence="1">
    <location>
        <begin position="3"/>
        <end position="20"/>
    </location>
</feature>
<feature type="disulfide bond" evidence="1">
    <location>
        <begin position="13"/>
        <end position="41"/>
    </location>
</feature>
<feature type="disulfide bond" evidence="1">
    <location>
        <begin position="26"/>
        <end position="30"/>
    </location>
</feature>
<feature type="disulfide bond" evidence="1">
    <location>
        <begin position="45"/>
        <end position="56"/>
    </location>
</feature>
<feature type="disulfide bond" evidence="1">
    <location>
        <begin position="57"/>
        <end position="62"/>
    </location>
</feature>
<proteinExistence type="evidence at protein level"/>
<evidence type="ECO:0000250" key="1"/>
<evidence type="ECO:0000250" key="2">
    <source>
        <dbReference type="UniProtKB" id="P60615"/>
    </source>
</evidence>
<evidence type="ECO:0000269" key="3">
    <source>
    </source>
</evidence>
<evidence type="ECO:0000305" key="4"/>
<reference key="1">
    <citation type="journal article" date="1978" name="Biochem. J.">
        <title>Three neurotoxins from the venom of a sea snake Astrotia stokesii, including two long-chain neurotoxic proteins with amidated C-termini.</title>
        <authorList>
            <person name="Maeda N."/>
            <person name="Tamiya N."/>
        </authorList>
    </citation>
    <scope>PROTEIN SEQUENCE</scope>
    <scope>AMIDATION AT ARG-72</scope>
    <scope>TOXIC DOSE</scope>
    <scope>SUBCELLULAR LOCATION</scope>
    <source>
        <tissue>Venom</tissue>
    </source>
</reference>
<comment type="function">
    <text evidence="2">Binds with high affinity to muscular (alpha-1/CHRNA1) and neuronal (alpha-7/CHRNA7) nicotinic acetylcholine receptor (nAChR) and inhibits acetylcholine from binding to the receptor, thereby impairing neuromuscular and neuronal transmission.</text>
</comment>
<comment type="subcellular location">
    <subcellularLocation>
        <location evidence="3">Secreted</location>
    </subcellularLocation>
</comment>
<comment type="tissue specificity">
    <text evidence="4">Expressed by the venom gland.</text>
</comment>
<comment type="toxic dose">
    <text evidence="3">LD(50) is 0.096 mg/kg by intramuscular injection into mice.</text>
</comment>
<comment type="similarity">
    <text evidence="4">Belongs to the three-finger toxin family. Long-chain subfamily. Type II alpha-neurotoxin sub-subfamily.</text>
</comment>
<keyword id="KW-0008">Acetylcholine receptor inhibiting toxin</keyword>
<keyword id="KW-0027">Amidation</keyword>
<keyword id="KW-0903">Direct protein sequencing</keyword>
<keyword id="KW-1015">Disulfide bond</keyword>
<keyword id="KW-0872">Ion channel impairing toxin</keyword>
<keyword id="KW-0528">Neurotoxin</keyword>
<keyword id="KW-0629">Postsynaptic neurotoxin</keyword>
<keyword id="KW-0964">Secreted</keyword>
<keyword id="KW-0800">Toxin</keyword>
<organism>
    <name type="scientific">Hydrophis stokesii</name>
    <name type="common">Stokes's sea snake</name>
    <name type="synonym">Astrotia stokesii</name>
    <dbReference type="NCBI Taxonomy" id="355677"/>
    <lineage>
        <taxon>Eukaryota</taxon>
        <taxon>Metazoa</taxon>
        <taxon>Chordata</taxon>
        <taxon>Craniata</taxon>
        <taxon>Vertebrata</taxon>
        <taxon>Euteleostomi</taxon>
        <taxon>Lepidosauria</taxon>
        <taxon>Squamata</taxon>
        <taxon>Bifurcata</taxon>
        <taxon>Unidentata</taxon>
        <taxon>Episquamata</taxon>
        <taxon>Toxicofera</taxon>
        <taxon>Serpentes</taxon>
        <taxon>Colubroidea</taxon>
        <taxon>Elapidae</taxon>
        <taxon>Hydrophiinae</taxon>
        <taxon>Hydrophis</taxon>
    </lineage>
</organism>
<sequence>LSCYLGYKHSQTCPPGENVCFVKTWCDAFCSTRGERIVMGCAATCPTAKSGVHIACCSTDNCNIYTKWGSGR</sequence>